<dbReference type="EMBL" id="CP001283">
    <property type="protein sequence ID" value="ACK92326.1"/>
    <property type="molecule type" value="Genomic_DNA"/>
</dbReference>
<dbReference type="RefSeq" id="WP_001095923.1">
    <property type="nucleotide sequence ID" value="NC_011773.1"/>
</dbReference>
<dbReference type="SMR" id="B7JH05"/>
<dbReference type="KEGG" id="bcu:BCAH820_1614"/>
<dbReference type="HOGENOM" id="CLU_126019_0_0_9"/>
<dbReference type="Proteomes" id="UP000001363">
    <property type="component" value="Chromosome"/>
</dbReference>
<dbReference type="Gene3D" id="3.40.1530.30">
    <property type="entry name" value="Uncharacterised family UPF0302, N-terminal domain"/>
    <property type="match status" value="1"/>
</dbReference>
<dbReference type="Gene3D" id="4.10.810.10">
    <property type="entry name" value="Virus Scaffolding Protein, Chain A"/>
    <property type="match status" value="1"/>
</dbReference>
<dbReference type="HAMAP" id="MF_00760">
    <property type="entry name" value="UPF0302"/>
    <property type="match status" value="1"/>
</dbReference>
<dbReference type="InterPro" id="IPR014957">
    <property type="entry name" value="IDEAL_dom"/>
</dbReference>
<dbReference type="InterPro" id="IPR011188">
    <property type="entry name" value="UPF0302"/>
</dbReference>
<dbReference type="InterPro" id="IPR014963">
    <property type="entry name" value="UPF0302_N"/>
</dbReference>
<dbReference type="InterPro" id="IPR038091">
    <property type="entry name" value="UPF0302_N_sf"/>
</dbReference>
<dbReference type="InterPro" id="IPR027393">
    <property type="entry name" value="Virus_scaffolding_prot_C"/>
</dbReference>
<dbReference type="NCBIfam" id="NF002965">
    <property type="entry name" value="PRK03636.1"/>
    <property type="match status" value="1"/>
</dbReference>
<dbReference type="Pfam" id="PF08858">
    <property type="entry name" value="IDEAL"/>
    <property type="match status" value="1"/>
</dbReference>
<dbReference type="Pfam" id="PF08864">
    <property type="entry name" value="UPF0302"/>
    <property type="match status" value="1"/>
</dbReference>
<dbReference type="PIRSF" id="PIRSF007165">
    <property type="entry name" value="UCP007165"/>
    <property type="match status" value="1"/>
</dbReference>
<dbReference type="SMART" id="SM00914">
    <property type="entry name" value="IDEAL"/>
    <property type="match status" value="1"/>
</dbReference>
<accession>B7JH05</accession>
<comment type="similarity">
    <text evidence="1">Belongs to the UPF0302 family.</text>
</comment>
<gene>
    <name type="ordered locus">BCAH820_1614</name>
</gene>
<feature type="chain" id="PRO_1000198314" description="UPF0302 protein BCAH820_1614">
    <location>
        <begin position="1"/>
        <end position="178"/>
    </location>
</feature>
<protein>
    <recommendedName>
        <fullName evidence="1">UPF0302 protein BCAH820_1614</fullName>
    </recommendedName>
</protein>
<reference key="1">
    <citation type="submission" date="2008-10" db="EMBL/GenBank/DDBJ databases">
        <title>Genome sequence of Bacillus cereus AH820.</title>
        <authorList>
            <person name="Dodson R.J."/>
            <person name="Durkin A.S."/>
            <person name="Rosovitz M.J."/>
            <person name="Rasko D.A."/>
            <person name="Hoffmaster A."/>
            <person name="Ravel J."/>
            <person name="Sutton G."/>
        </authorList>
    </citation>
    <scope>NUCLEOTIDE SEQUENCE [LARGE SCALE GENOMIC DNA]</scope>
    <source>
        <strain>AH820</strain>
    </source>
</reference>
<evidence type="ECO:0000255" key="1">
    <source>
        <dbReference type="HAMAP-Rule" id="MF_00760"/>
    </source>
</evidence>
<proteinExistence type="inferred from homology"/>
<sequence length="178" mass="21432">MNTPVSVNEKKDFVKWFLNNYQLKQRECVWILNYLMSHDQLMHKVHFVEHAKYCPRGLVMSANCVKDTPFHFFKQNVMTTDAEKSFHDIRLNRDEDIYIQLNFKSSFQNANYVAVLEENPYLPKHIEVNEKDRLLAERFLEESVFSFRRERLLKQIDEALDKQDKEAFHRLTAELKML</sequence>
<organism>
    <name type="scientific">Bacillus cereus (strain AH820)</name>
    <dbReference type="NCBI Taxonomy" id="405535"/>
    <lineage>
        <taxon>Bacteria</taxon>
        <taxon>Bacillati</taxon>
        <taxon>Bacillota</taxon>
        <taxon>Bacilli</taxon>
        <taxon>Bacillales</taxon>
        <taxon>Bacillaceae</taxon>
        <taxon>Bacillus</taxon>
        <taxon>Bacillus cereus group</taxon>
    </lineage>
</organism>
<name>Y1614_BACC0</name>